<dbReference type="EC" id="1.8.-.-" evidence="4"/>
<dbReference type="EMBL" id="CR859537">
    <property type="protein sequence ID" value="CAH91703.1"/>
    <property type="molecule type" value="mRNA"/>
</dbReference>
<dbReference type="RefSeq" id="NP_001124560.1">
    <property type="nucleotide sequence ID" value="NM_001131088.1"/>
</dbReference>
<dbReference type="SMR" id="Q5R957"/>
<dbReference type="FunCoup" id="Q5R957">
    <property type="interactions" value="1797"/>
</dbReference>
<dbReference type="STRING" id="9601.ENSPPYP00000001982"/>
<dbReference type="GeneID" id="100169733"/>
<dbReference type="KEGG" id="pon:100169733"/>
<dbReference type="CTD" id="25932"/>
<dbReference type="eggNOG" id="KOG1422">
    <property type="taxonomic scope" value="Eukaryota"/>
</dbReference>
<dbReference type="InParanoid" id="Q5R957"/>
<dbReference type="OrthoDB" id="1935530at2759"/>
<dbReference type="Proteomes" id="UP000001595">
    <property type="component" value="Unplaced"/>
</dbReference>
<dbReference type="GO" id="GO:0070161">
    <property type="term" value="C:anchoring junction"/>
    <property type="evidence" value="ECO:0007669"/>
    <property type="project" value="UniProtKB-SubCell"/>
</dbReference>
<dbReference type="GO" id="GO:0005813">
    <property type="term" value="C:centrosome"/>
    <property type="evidence" value="ECO:0007669"/>
    <property type="project" value="UniProtKB-SubCell"/>
</dbReference>
<dbReference type="GO" id="GO:0034707">
    <property type="term" value="C:chloride channel complex"/>
    <property type="evidence" value="ECO:0007669"/>
    <property type="project" value="UniProtKB-KW"/>
</dbReference>
<dbReference type="GO" id="GO:0030659">
    <property type="term" value="C:cytoplasmic vesicle membrane"/>
    <property type="evidence" value="ECO:0007669"/>
    <property type="project" value="UniProtKB-SubCell"/>
</dbReference>
<dbReference type="GO" id="GO:0005739">
    <property type="term" value="C:mitochondrion"/>
    <property type="evidence" value="ECO:0007669"/>
    <property type="project" value="UniProtKB-SubCell"/>
</dbReference>
<dbReference type="GO" id="GO:0005634">
    <property type="term" value="C:nucleus"/>
    <property type="evidence" value="ECO:0007669"/>
    <property type="project" value="UniProtKB-SubCell"/>
</dbReference>
<dbReference type="GO" id="GO:0005886">
    <property type="term" value="C:plasma membrane"/>
    <property type="evidence" value="ECO:0007669"/>
    <property type="project" value="UniProtKB-SubCell"/>
</dbReference>
<dbReference type="GO" id="GO:0005254">
    <property type="term" value="F:chloride channel activity"/>
    <property type="evidence" value="ECO:0007669"/>
    <property type="project" value="UniProtKB-KW"/>
</dbReference>
<dbReference type="GO" id="GO:0016491">
    <property type="term" value="F:oxidoreductase activity"/>
    <property type="evidence" value="ECO:0007669"/>
    <property type="project" value="UniProtKB-KW"/>
</dbReference>
<dbReference type="CDD" id="cd10296">
    <property type="entry name" value="GST_C_CLIC4"/>
    <property type="match status" value="1"/>
</dbReference>
<dbReference type="CDD" id="cd03061">
    <property type="entry name" value="GST_N_CLIC"/>
    <property type="match status" value="1"/>
</dbReference>
<dbReference type="FunFam" id="1.20.1050.10:FF:000001">
    <property type="entry name" value="Chloride intracellular channel 2"/>
    <property type="match status" value="1"/>
</dbReference>
<dbReference type="FunFam" id="3.40.30.10:FF:000021">
    <property type="entry name" value="Chloride intracellular channel 4"/>
    <property type="match status" value="1"/>
</dbReference>
<dbReference type="Gene3D" id="1.20.1050.10">
    <property type="match status" value="1"/>
</dbReference>
<dbReference type="Gene3D" id="3.40.30.10">
    <property type="entry name" value="Glutaredoxin"/>
    <property type="match status" value="1"/>
</dbReference>
<dbReference type="InterPro" id="IPR002946">
    <property type="entry name" value="CLIC"/>
</dbReference>
<dbReference type="InterPro" id="IPR053823">
    <property type="entry name" value="CLIC_N"/>
</dbReference>
<dbReference type="InterPro" id="IPR010987">
    <property type="entry name" value="Glutathione-S-Trfase_C-like"/>
</dbReference>
<dbReference type="InterPro" id="IPR036282">
    <property type="entry name" value="Glutathione-S-Trfase_C_sf"/>
</dbReference>
<dbReference type="InterPro" id="IPR040079">
    <property type="entry name" value="Glutathione_S-Trfase"/>
</dbReference>
<dbReference type="InterPro" id="IPR036249">
    <property type="entry name" value="Thioredoxin-like_sf"/>
</dbReference>
<dbReference type="NCBIfam" id="TIGR00862">
    <property type="entry name" value="O-ClC"/>
    <property type="match status" value="1"/>
</dbReference>
<dbReference type="PANTHER" id="PTHR45476:SF5">
    <property type="entry name" value="CHLORIDE INTRACELLULAR CHANNEL 4-RELATED"/>
    <property type="match status" value="1"/>
</dbReference>
<dbReference type="PANTHER" id="PTHR45476">
    <property type="entry name" value="CHLORIDE INTRACELLULAR CHANNEL PROTEIN 6-RELATED"/>
    <property type="match status" value="1"/>
</dbReference>
<dbReference type="Pfam" id="PF22441">
    <property type="entry name" value="CLIC-like_N"/>
    <property type="match status" value="1"/>
</dbReference>
<dbReference type="Pfam" id="PF13410">
    <property type="entry name" value="GST_C_2"/>
    <property type="match status" value="1"/>
</dbReference>
<dbReference type="PRINTS" id="PR01263">
    <property type="entry name" value="INTCLCHANNEL"/>
</dbReference>
<dbReference type="SFLD" id="SFLDS00019">
    <property type="entry name" value="Glutathione_Transferase_(cytos"/>
    <property type="match status" value="1"/>
</dbReference>
<dbReference type="SFLD" id="SFLDG00358">
    <property type="entry name" value="Main_(cytGST)"/>
    <property type="match status" value="1"/>
</dbReference>
<dbReference type="SUPFAM" id="SSF47616">
    <property type="entry name" value="GST C-terminal domain-like"/>
    <property type="match status" value="1"/>
</dbReference>
<dbReference type="SUPFAM" id="SSF52833">
    <property type="entry name" value="Thioredoxin-like"/>
    <property type="match status" value="1"/>
</dbReference>
<dbReference type="PROSITE" id="PS50405">
    <property type="entry name" value="GST_CTER"/>
    <property type="match status" value="1"/>
</dbReference>
<evidence type="ECO:0000250" key="1"/>
<evidence type="ECO:0000250" key="2">
    <source>
        <dbReference type="UniProtKB" id="O00299"/>
    </source>
</evidence>
<evidence type="ECO:0000250" key="3">
    <source>
        <dbReference type="UniProtKB" id="Q9QYB1"/>
    </source>
</evidence>
<evidence type="ECO:0000250" key="4">
    <source>
        <dbReference type="UniProtKB" id="Q9Y696"/>
    </source>
</evidence>
<evidence type="ECO:0000250" key="5">
    <source>
        <dbReference type="UniProtKB" id="Q9Z0W7"/>
    </source>
</evidence>
<evidence type="ECO:0000250" key="6">
    <source>
        <dbReference type="UniProtKB" id="Q9Z1Q5"/>
    </source>
</evidence>
<evidence type="ECO:0000255" key="7"/>
<evidence type="ECO:0000255" key="8">
    <source>
        <dbReference type="PROSITE-ProRule" id="PRU00685"/>
    </source>
</evidence>
<evidence type="ECO:0000305" key="9"/>
<proteinExistence type="evidence at transcript level"/>
<keyword id="KW-0007">Acetylation</keyword>
<keyword id="KW-0965">Cell junction</keyword>
<keyword id="KW-1003">Cell membrane</keyword>
<keyword id="KW-0868">Chloride</keyword>
<keyword id="KW-0869">Chloride channel</keyword>
<keyword id="KW-0963">Cytoplasm</keyword>
<keyword id="KW-0968">Cytoplasmic vesicle</keyword>
<keyword id="KW-0206">Cytoskeleton</keyword>
<keyword id="KW-0407">Ion channel</keyword>
<keyword id="KW-0406">Ion transport</keyword>
<keyword id="KW-0472">Membrane</keyword>
<keyword id="KW-0496">Mitochondrion</keyword>
<keyword id="KW-0539">Nucleus</keyword>
<keyword id="KW-0560">Oxidoreductase</keyword>
<keyword id="KW-0597">Phosphoprotein</keyword>
<keyword id="KW-1185">Reference proteome</keyword>
<keyword id="KW-0812">Transmembrane</keyword>
<keyword id="KW-1133">Transmembrane helix</keyword>
<keyword id="KW-0813">Transport</keyword>
<keyword id="KW-0851">Voltage-gated channel</keyword>
<sequence>MALSMPLNGLKEEDKEPLIELFVKAGSDGESIGNCPFSQRLFMILWLKGVVFSVSTVDLKRKPADLQNLAPGTHPPFITFNSEVKTDVNKIEEFLEEVLCPPKYLKLSPKHPESNTAGMDIFAKFSAYIKNSRPEANEALERGLLKTLQKLDEYLNSPLPDEIDENSMEDIKFSTRKFLDGDEMTLADCNLLPKLHIVKVVAKKYRNFDIPKEMTGIWRYLTNAYSRDEFTNTCPSDKEVEIAYSDVAKRLTK</sequence>
<name>CLIC4_PONAB</name>
<feature type="initiator methionine" description="Removed" evidence="4">
    <location>
        <position position="1"/>
    </location>
</feature>
<feature type="chain" id="PRO_0000236803" description="Chloride intracellular channel protein 4">
    <location>
        <begin position="2"/>
        <end position="253"/>
    </location>
</feature>
<feature type="transmembrane region" description="Helical; Note=After insertion into the membrane" evidence="7">
    <location>
        <begin position="37"/>
        <end position="57"/>
    </location>
</feature>
<feature type="domain" description="GST C-terminal" evidence="8">
    <location>
        <begin position="81"/>
        <end position="244"/>
    </location>
</feature>
<feature type="region of interest" description="Required for insertion into the membrane" evidence="1">
    <location>
        <begin position="2"/>
        <end position="101"/>
    </location>
</feature>
<feature type="modified residue" description="N-acetylalanine" evidence="4">
    <location>
        <position position="2"/>
    </location>
</feature>
<feature type="modified residue" description="Phosphoserine" evidence="4">
    <location>
        <position position="4"/>
    </location>
</feature>
<feature type="modified residue" description="N6-acetyllysine" evidence="2">
    <location>
        <position position="24"/>
    </location>
</feature>
<feature type="modified residue" description="N6-acetyllysine" evidence="4">
    <location>
        <position position="130"/>
    </location>
</feature>
<feature type="modified residue" description="Phosphoserine" evidence="2">
    <location>
        <position position="132"/>
    </location>
</feature>
<feature type="modified residue" description="Phosphoserine" evidence="2">
    <location>
        <position position="167"/>
    </location>
</feature>
<feature type="modified residue" description="Phosphoserine" evidence="3">
    <location>
        <position position="236"/>
    </location>
</feature>
<feature type="modified residue" description="Phosphotyrosine" evidence="6">
    <location>
        <position position="244"/>
    </location>
</feature>
<organism>
    <name type="scientific">Pongo abelii</name>
    <name type="common">Sumatran orangutan</name>
    <name type="synonym">Pongo pygmaeus abelii</name>
    <dbReference type="NCBI Taxonomy" id="9601"/>
    <lineage>
        <taxon>Eukaryota</taxon>
        <taxon>Metazoa</taxon>
        <taxon>Chordata</taxon>
        <taxon>Craniata</taxon>
        <taxon>Vertebrata</taxon>
        <taxon>Euteleostomi</taxon>
        <taxon>Mammalia</taxon>
        <taxon>Eutheria</taxon>
        <taxon>Euarchontoglires</taxon>
        <taxon>Primates</taxon>
        <taxon>Haplorrhini</taxon>
        <taxon>Catarrhini</taxon>
        <taxon>Hominidae</taxon>
        <taxon>Pongo</taxon>
    </lineage>
</organism>
<reference key="1">
    <citation type="submission" date="2004-11" db="EMBL/GenBank/DDBJ databases">
        <authorList>
            <consortium name="The German cDNA consortium"/>
        </authorList>
    </citation>
    <scope>NUCLEOTIDE SEQUENCE [LARGE SCALE MRNA]</scope>
    <source>
        <tissue>Brain cortex</tissue>
    </source>
</reference>
<comment type="function">
    <text evidence="4 5">In the soluble state, catalyzes glutaredoxin-like thiol disulfide exchange reactions with reduced glutathione as electron donor (By similarity). Can insert into membranes and form voltage-dependent multi-ion conductive channels. Membrane insertion seems to be redox-regulated and may occur only under oxidizing conditions (By similarity). Has alternate cellular functions like a potential role in angiogenesis or in maintaining apical-basolateral membrane polarity during mitosis and cytokinesis. Could also promote endothelial cell proliferation and regulate endothelial morphogenesis (tubulogenesis). Promotes cell-surface expression of HRH3 (By similarity).</text>
</comment>
<comment type="catalytic activity">
    <reaction evidence="4 5">
        <text>chloride(in) = chloride(out)</text>
        <dbReference type="Rhea" id="RHEA:29823"/>
        <dbReference type="ChEBI" id="CHEBI:17996"/>
    </reaction>
</comment>
<comment type="catalytic activity">
    <reaction evidence="5">
        <text>thiocyanate(in) = thiocyanate(out)</text>
        <dbReference type="Rhea" id="RHEA:75347"/>
        <dbReference type="ChEBI" id="CHEBI:18022"/>
    </reaction>
</comment>
<comment type="catalytic activity">
    <reaction evidence="5">
        <text>nitrate(in) = nitrate(out)</text>
        <dbReference type="Rhea" id="RHEA:34923"/>
        <dbReference type="ChEBI" id="CHEBI:17632"/>
    </reaction>
</comment>
<comment type="catalytic activity">
    <reaction evidence="5">
        <text>iodide(out) = iodide(in)</text>
        <dbReference type="Rhea" id="RHEA:66324"/>
        <dbReference type="ChEBI" id="CHEBI:16382"/>
    </reaction>
</comment>
<comment type="catalytic activity">
    <reaction evidence="5">
        <text>bromide(in) = bromide(out)</text>
        <dbReference type="Rhea" id="RHEA:75383"/>
        <dbReference type="ChEBI" id="CHEBI:15858"/>
    </reaction>
</comment>
<comment type="catalytic activity">
    <reaction evidence="5">
        <text>fluoride(in) = fluoride(out)</text>
        <dbReference type="Rhea" id="RHEA:76159"/>
        <dbReference type="ChEBI" id="CHEBI:17051"/>
    </reaction>
</comment>
<comment type="catalytic activity">
    <reaction evidence="5">
        <text>choline(out) = choline(in)</text>
        <dbReference type="Rhea" id="RHEA:32751"/>
        <dbReference type="ChEBI" id="CHEBI:15354"/>
    </reaction>
</comment>
<comment type="subunit">
    <text evidence="1">Monomer. Interacts with HRH3 (By similarity).</text>
</comment>
<comment type="subcellular location">
    <subcellularLocation>
        <location evidence="4">Cytoplasm</location>
        <location evidence="4">Cytoskeleton</location>
        <location evidence="4">Microtubule organizing center</location>
        <location evidence="4">Centrosome</location>
    </subcellularLocation>
    <subcellularLocation>
        <location evidence="4">Cytoplasmic vesicle membrane</location>
        <topology evidence="4">Single-pass membrane protein</topology>
    </subcellularLocation>
    <subcellularLocation>
        <location evidence="4">Nucleus</location>
    </subcellularLocation>
    <subcellularLocation>
        <location evidence="4">Cell membrane</location>
        <topology evidence="4">Single-pass membrane protein</topology>
    </subcellularLocation>
    <subcellularLocation>
        <location evidence="5">Mitochondrion</location>
    </subcellularLocation>
    <subcellularLocation>
        <location evidence="4">Cell junction</location>
    </subcellularLocation>
    <text evidence="4 5">Colocalized with AKAP9 at the centrosome and midbody. Exists both as soluble cytoplasmic protein and as membrane protein with probably a single transmembrane domain. Present in an intracellular vesicular compartment that likely represent trans-Golgi network vesicles. Might not be present in the nucleus of cardiac cells.</text>
</comment>
<comment type="domain">
    <text evidence="4">The active G-site contains a monothiol Cys-X-X-Ser motif which mediates glutathione-dependent redox catalysis.</text>
</comment>
<comment type="domain">
    <text evidence="4">Members of this family may change from a globular, soluble state to a state where the N-terminal domain is inserted into the membrane and functions as a chloride channel. The redox status of the active cysteine in Cys-X-X-Cys/Ser motif likely determines the capacity to adopt a soluble or membrane-inserted state. A conformation change of the N-terminal domain is thought to expose hydrophobic surfaces that trigger membrane insertion.</text>
</comment>
<comment type="similarity">
    <text evidence="9">Belongs to the chloride channel CLIC family.</text>
</comment>
<protein>
    <recommendedName>
        <fullName>Chloride intracellular channel protein 4</fullName>
    </recommendedName>
    <alternativeName>
        <fullName evidence="4">Glutaredoxin-like oxidoreductase CLIC4</fullName>
        <ecNumber evidence="4">1.8.-.-</ecNumber>
    </alternativeName>
</protein>
<accession>Q5R957</accession>
<gene>
    <name type="primary">CLIC4</name>
</gene>